<evidence type="ECO:0000255" key="1">
    <source>
        <dbReference type="HAMAP-Rule" id="MF_01021"/>
    </source>
</evidence>
<reference key="1">
    <citation type="journal article" date="2000" name="Proc. Natl. Acad. Sci. U.S.A.">
        <title>Genome sequence of Halobacterium species NRC-1.</title>
        <authorList>
            <person name="Ng W.V."/>
            <person name="Kennedy S.P."/>
            <person name="Mahairas G.G."/>
            <person name="Berquist B."/>
            <person name="Pan M."/>
            <person name="Shukla H.D."/>
            <person name="Lasky S.R."/>
            <person name="Baliga N.S."/>
            <person name="Thorsson V."/>
            <person name="Sbrogna J."/>
            <person name="Swartzell S."/>
            <person name="Weir D."/>
            <person name="Hall J."/>
            <person name="Dahl T.A."/>
            <person name="Welti R."/>
            <person name="Goo Y.A."/>
            <person name="Leithauser B."/>
            <person name="Keller K."/>
            <person name="Cruz R."/>
            <person name="Danson M.J."/>
            <person name="Hough D.W."/>
            <person name="Maddocks D.G."/>
            <person name="Jablonski P.E."/>
            <person name="Krebs M.P."/>
            <person name="Angevine C.M."/>
            <person name="Dale H."/>
            <person name="Isenbarger T.A."/>
            <person name="Peck R.F."/>
            <person name="Pohlschroder M."/>
            <person name="Spudich J.L."/>
            <person name="Jung K.-H."/>
            <person name="Alam M."/>
            <person name="Freitas T."/>
            <person name="Hou S."/>
            <person name="Daniels C.J."/>
            <person name="Dennis P.P."/>
            <person name="Omer A.D."/>
            <person name="Ebhardt H."/>
            <person name="Lowe T.M."/>
            <person name="Liang P."/>
            <person name="Riley M."/>
            <person name="Hood L."/>
            <person name="DasSarma S."/>
        </authorList>
    </citation>
    <scope>NUCLEOTIDE SEQUENCE [LARGE SCALE GENOMIC DNA]</scope>
    <source>
        <strain>ATCC 700922 / JCM 11081 / NRC-1</strain>
    </source>
</reference>
<comment type="function">
    <text evidence="1">Catalyzes the hydrolysis of the adenine ring of phosphoribosyl-AMP.</text>
</comment>
<comment type="catalytic activity">
    <reaction evidence="1">
        <text>1-(5-phospho-beta-D-ribosyl)-5'-AMP + H2O = 1-(5-phospho-beta-D-ribosyl)-5-[(5-phospho-beta-D-ribosylamino)methylideneamino]imidazole-4-carboxamide</text>
        <dbReference type="Rhea" id="RHEA:20049"/>
        <dbReference type="ChEBI" id="CHEBI:15377"/>
        <dbReference type="ChEBI" id="CHEBI:58435"/>
        <dbReference type="ChEBI" id="CHEBI:59457"/>
        <dbReference type="EC" id="3.5.4.19"/>
    </reaction>
</comment>
<comment type="cofactor">
    <cofactor evidence="1">
        <name>Mg(2+)</name>
        <dbReference type="ChEBI" id="CHEBI:18420"/>
    </cofactor>
    <text evidence="1">Binds 1 Mg(2+) ion per subunit.</text>
</comment>
<comment type="cofactor">
    <cofactor evidence="1">
        <name>Zn(2+)</name>
        <dbReference type="ChEBI" id="CHEBI:29105"/>
    </cofactor>
    <text evidence="1">Binds 1 zinc ion per subunit.</text>
</comment>
<comment type="pathway">
    <text evidence="1">Amino-acid biosynthesis; L-histidine biosynthesis; L-histidine from 5-phospho-alpha-D-ribose 1-diphosphate: step 3/9.</text>
</comment>
<comment type="subunit">
    <text evidence="1">Homodimer.</text>
</comment>
<comment type="subcellular location">
    <subcellularLocation>
        <location evidence="1">Cytoplasm</location>
    </subcellularLocation>
</comment>
<comment type="similarity">
    <text evidence="1">Belongs to the PRA-CH family.</text>
</comment>
<protein>
    <recommendedName>
        <fullName evidence="1">Phosphoribosyl-AMP cyclohydrolase</fullName>
        <shortName evidence="1">PRA-CH</shortName>
        <ecNumber evidence="1">3.5.4.19</ecNumber>
    </recommendedName>
</protein>
<feature type="chain" id="PRO_0000136505" description="Phosphoribosyl-AMP cyclohydrolase">
    <location>
        <begin position="1"/>
        <end position="129"/>
    </location>
</feature>
<feature type="binding site" evidence="1">
    <location>
        <position position="84"/>
    </location>
    <ligand>
        <name>Mg(2+)</name>
        <dbReference type="ChEBI" id="CHEBI:18420"/>
    </ligand>
</feature>
<feature type="binding site" evidence="1">
    <location>
        <position position="85"/>
    </location>
    <ligand>
        <name>Zn(2+)</name>
        <dbReference type="ChEBI" id="CHEBI:29105"/>
        <note>ligand shared between dimeric partners</note>
    </ligand>
</feature>
<feature type="binding site" evidence="1">
    <location>
        <position position="86"/>
    </location>
    <ligand>
        <name>Mg(2+)</name>
        <dbReference type="ChEBI" id="CHEBI:18420"/>
    </ligand>
</feature>
<feature type="binding site" evidence="1">
    <location>
        <position position="88"/>
    </location>
    <ligand>
        <name>Mg(2+)</name>
        <dbReference type="ChEBI" id="CHEBI:18420"/>
    </ligand>
</feature>
<feature type="binding site" evidence="1">
    <location>
        <position position="101"/>
    </location>
    <ligand>
        <name>Zn(2+)</name>
        <dbReference type="ChEBI" id="CHEBI:29105"/>
        <note>ligand shared between dimeric partners</note>
    </ligand>
</feature>
<feature type="binding site" evidence="1">
    <location>
        <position position="108"/>
    </location>
    <ligand>
        <name>Zn(2+)</name>
        <dbReference type="ChEBI" id="CHEBI:29105"/>
        <note>ligand shared between dimeric partners</note>
    </ligand>
</feature>
<name>HIS3_HALSA</name>
<keyword id="KW-0028">Amino-acid biosynthesis</keyword>
<keyword id="KW-0963">Cytoplasm</keyword>
<keyword id="KW-0368">Histidine biosynthesis</keyword>
<keyword id="KW-0378">Hydrolase</keyword>
<keyword id="KW-0460">Magnesium</keyword>
<keyword id="KW-0479">Metal-binding</keyword>
<keyword id="KW-1185">Reference proteome</keyword>
<keyword id="KW-0862">Zinc</keyword>
<gene>
    <name evidence="1" type="primary">hisI</name>
    <name type="synonym">hisJ</name>
    <name type="ordered locus">VNG_2284G</name>
</gene>
<sequence>MEEFDVDLDFGGAGHTDDGDGLVAVIAQDADSRDVLMLAYATREAVARTATTGRAHYYSRSRDELWEKGATSGNTQSVDEIRVDCDGDALLYLVAQTGGACHTGHESCFHRTLDGDTVGDQVFDPDDAY</sequence>
<organism>
    <name type="scientific">Halobacterium salinarum (strain ATCC 700922 / JCM 11081 / NRC-1)</name>
    <name type="common">Halobacterium halobium</name>
    <dbReference type="NCBI Taxonomy" id="64091"/>
    <lineage>
        <taxon>Archaea</taxon>
        <taxon>Methanobacteriati</taxon>
        <taxon>Methanobacteriota</taxon>
        <taxon>Stenosarchaea group</taxon>
        <taxon>Halobacteria</taxon>
        <taxon>Halobacteriales</taxon>
        <taxon>Halobacteriaceae</taxon>
        <taxon>Halobacterium</taxon>
        <taxon>Halobacterium salinarum NRC-34001</taxon>
    </lineage>
</organism>
<accession>Q9HN23</accession>
<proteinExistence type="inferred from homology"/>
<dbReference type="EC" id="3.5.4.19" evidence="1"/>
<dbReference type="EMBL" id="AE004437">
    <property type="protein sequence ID" value="AAG20398.1"/>
    <property type="molecule type" value="Genomic_DNA"/>
</dbReference>
<dbReference type="PIR" id="B84379">
    <property type="entry name" value="B84379"/>
</dbReference>
<dbReference type="RefSeq" id="WP_010903699.1">
    <property type="nucleotide sequence ID" value="NC_002607.1"/>
</dbReference>
<dbReference type="SMR" id="Q9HN23"/>
<dbReference type="FunCoup" id="Q9HN23">
    <property type="interactions" value="51"/>
</dbReference>
<dbReference type="STRING" id="64091.VNG_2284G"/>
<dbReference type="PaxDb" id="64091-VNG_2284G"/>
<dbReference type="GeneID" id="68694830"/>
<dbReference type="KEGG" id="hal:VNG_2284G"/>
<dbReference type="PATRIC" id="fig|64091.14.peg.1761"/>
<dbReference type="HOGENOM" id="CLU_048577_5_0_2"/>
<dbReference type="InParanoid" id="Q9HN23"/>
<dbReference type="OrthoDB" id="5853at2157"/>
<dbReference type="PhylomeDB" id="Q9HN23"/>
<dbReference type="UniPathway" id="UPA00031">
    <property type="reaction ID" value="UER00008"/>
</dbReference>
<dbReference type="Proteomes" id="UP000000554">
    <property type="component" value="Chromosome"/>
</dbReference>
<dbReference type="GO" id="GO:0005737">
    <property type="term" value="C:cytoplasm"/>
    <property type="evidence" value="ECO:0007669"/>
    <property type="project" value="UniProtKB-SubCell"/>
</dbReference>
<dbReference type="GO" id="GO:0000287">
    <property type="term" value="F:magnesium ion binding"/>
    <property type="evidence" value="ECO:0007669"/>
    <property type="project" value="UniProtKB-UniRule"/>
</dbReference>
<dbReference type="GO" id="GO:0004635">
    <property type="term" value="F:phosphoribosyl-AMP cyclohydrolase activity"/>
    <property type="evidence" value="ECO:0007669"/>
    <property type="project" value="UniProtKB-UniRule"/>
</dbReference>
<dbReference type="GO" id="GO:0008270">
    <property type="term" value="F:zinc ion binding"/>
    <property type="evidence" value="ECO:0007669"/>
    <property type="project" value="UniProtKB-UniRule"/>
</dbReference>
<dbReference type="GO" id="GO:0000105">
    <property type="term" value="P:L-histidine biosynthetic process"/>
    <property type="evidence" value="ECO:0007669"/>
    <property type="project" value="UniProtKB-UniRule"/>
</dbReference>
<dbReference type="FunFam" id="3.10.20.810:FF:000001">
    <property type="entry name" value="Histidine biosynthesis bifunctional protein HisIE"/>
    <property type="match status" value="1"/>
</dbReference>
<dbReference type="Gene3D" id="3.10.20.810">
    <property type="entry name" value="Phosphoribosyl-AMP cyclohydrolase"/>
    <property type="match status" value="1"/>
</dbReference>
<dbReference type="HAMAP" id="MF_01021">
    <property type="entry name" value="HisI"/>
    <property type="match status" value="1"/>
</dbReference>
<dbReference type="InterPro" id="IPR026660">
    <property type="entry name" value="PRA-CH"/>
</dbReference>
<dbReference type="InterPro" id="IPR002496">
    <property type="entry name" value="PRib_AMP_CycHydrolase_dom"/>
</dbReference>
<dbReference type="InterPro" id="IPR038019">
    <property type="entry name" value="PRib_AMP_CycHydrolase_sf"/>
</dbReference>
<dbReference type="NCBIfam" id="NF000768">
    <property type="entry name" value="PRK00051.1"/>
    <property type="match status" value="1"/>
</dbReference>
<dbReference type="PANTHER" id="PTHR42945">
    <property type="entry name" value="HISTIDINE BIOSYNTHESIS BIFUNCTIONAL PROTEIN"/>
    <property type="match status" value="1"/>
</dbReference>
<dbReference type="PANTHER" id="PTHR42945:SF1">
    <property type="entry name" value="HISTIDINE BIOSYNTHESIS BIFUNCTIONAL PROTEIN HIS7"/>
    <property type="match status" value="1"/>
</dbReference>
<dbReference type="Pfam" id="PF01502">
    <property type="entry name" value="PRA-CH"/>
    <property type="match status" value="1"/>
</dbReference>
<dbReference type="SUPFAM" id="SSF141734">
    <property type="entry name" value="HisI-like"/>
    <property type="match status" value="1"/>
</dbReference>